<accession>B9DYB5</accession>
<comment type="function">
    <text evidence="1">Binds the lower part of the 30S subunit head. Binds mRNA in the 70S ribosome, positioning it for translation.</text>
</comment>
<comment type="subunit">
    <text evidence="1">Part of the 30S ribosomal subunit. Forms a tight complex with proteins S10 and S14.</text>
</comment>
<comment type="similarity">
    <text evidence="1">Belongs to the universal ribosomal protein uS3 family.</text>
</comment>
<keyword id="KW-0687">Ribonucleoprotein</keyword>
<keyword id="KW-0689">Ribosomal protein</keyword>
<keyword id="KW-0694">RNA-binding</keyword>
<keyword id="KW-0699">rRNA-binding</keyword>
<protein>
    <recommendedName>
        <fullName evidence="1">Small ribosomal subunit protein uS3</fullName>
    </recommendedName>
    <alternativeName>
        <fullName evidence="2">30S ribosomal protein S3</fullName>
    </alternativeName>
</protein>
<reference key="1">
    <citation type="submission" date="2005-09" db="EMBL/GenBank/DDBJ databases">
        <title>Complete genome sequence of Clostridium kluyveri and comparative genomics of Clostridia species.</title>
        <authorList>
            <person name="Inui M."/>
            <person name="Nonaka H."/>
            <person name="Shinoda Y."/>
            <person name="Ikenaga Y."/>
            <person name="Abe M."/>
            <person name="Naito K."/>
            <person name="Vertes A.A."/>
            <person name="Yukawa H."/>
        </authorList>
    </citation>
    <scope>NUCLEOTIDE SEQUENCE [LARGE SCALE GENOMIC DNA]</scope>
    <source>
        <strain>NBRC 12016</strain>
    </source>
</reference>
<proteinExistence type="inferred from homology"/>
<feature type="chain" id="PRO_1000165489" description="Small ribosomal subunit protein uS3">
    <location>
        <begin position="1"/>
        <end position="223"/>
    </location>
</feature>
<feature type="domain" description="KH type-2" evidence="1">
    <location>
        <begin position="39"/>
        <end position="108"/>
    </location>
</feature>
<evidence type="ECO:0000255" key="1">
    <source>
        <dbReference type="HAMAP-Rule" id="MF_01309"/>
    </source>
</evidence>
<evidence type="ECO:0000305" key="2"/>
<sequence>MGQKVHPHGLRVGIIKEWDAKWYADKKNFADNLVEDNKIRKFVKKKGAIAGISKIQIERAAKRIKLNIFTAKPGMIIGKGGQGIEALKTELKKIVPDKVILINIVEVKVAEADAQLMAENIALQLEKRISFRRAMKQTIQRAMKSGIKGVKTTCSGRLGGAEIARSESYHEGTIPLQTLRADIDYGFAEADTTYGKIGVKVWVYKGEVLPVKKPVENKEEAKA</sequence>
<name>RS3_CLOK1</name>
<dbReference type="EMBL" id="AP009049">
    <property type="protein sequence ID" value="BAH05240.1"/>
    <property type="molecule type" value="Genomic_DNA"/>
</dbReference>
<dbReference type="RefSeq" id="WP_011988809.1">
    <property type="nucleotide sequence ID" value="NC_011837.1"/>
</dbReference>
<dbReference type="SMR" id="B9DYB5"/>
<dbReference type="KEGG" id="ckr:CKR_0189"/>
<dbReference type="HOGENOM" id="CLU_058591_0_2_9"/>
<dbReference type="Proteomes" id="UP000007969">
    <property type="component" value="Chromosome"/>
</dbReference>
<dbReference type="GO" id="GO:0022627">
    <property type="term" value="C:cytosolic small ribosomal subunit"/>
    <property type="evidence" value="ECO:0007669"/>
    <property type="project" value="TreeGrafter"/>
</dbReference>
<dbReference type="GO" id="GO:0003729">
    <property type="term" value="F:mRNA binding"/>
    <property type="evidence" value="ECO:0007669"/>
    <property type="project" value="UniProtKB-UniRule"/>
</dbReference>
<dbReference type="GO" id="GO:0019843">
    <property type="term" value="F:rRNA binding"/>
    <property type="evidence" value="ECO:0007669"/>
    <property type="project" value="UniProtKB-UniRule"/>
</dbReference>
<dbReference type="GO" id="GO:0003735">
    <property type="term" value="F:structural constituent of ribosome"/>
    <property type="evidence" value="ECO:0007669"/>
    <property type="project" value="InterPro"/>
</dbReference>
<dbReference type="GO" id="GO:0006412">
    <property type="term" value="P:translation"/>
    <property type="evidence" value="ECO:0007669"/>
    <property type="project" value="UniProtKB-UniRule"/>
</dbReference>
<dbReference type="CDD" id="cd02412">
    <property type="entry name" value="KH-II_30S_S3"/>
    <property type="match status" value="1"/>
</dbReference>
<dbReference type="FunFam" id="3.30.1140.32:FF:000002">
    <property type="entry name" value="30S ribosomal protein S3"/>
    <property type="match status" value="1"/>
</dbReference>
<dbReference type="FunFam" id="3.30.300.20:FF:000001">
    <property type="entry name" value="30S ribosomal protein S3"/>
    <property type="match status" value="1"/>
</dbReference>
<dbReference type="Gene3D" id="3.30.300.20">
    <property type="match status" value="1"/>
</dbReference>
<dbReference type="Gene3D" id="3.30.1140.32">
    <property type="entry name" value="Ribosomal protein S3, C-terminal domain"/>
    <property type="match status" value="1"/>
</dbReference>
<dbReference type="HAMAP" id="MF_01309_B">
    <property type="entry name" value="Ribosomal_uS3_B"/>
    <property type="match status" value="1"/>
</dbReference>
<dbReference type="InterPro" id="IPR004087">
    <property type="entry name" value="KH_dom"/>
</dbReference>
<dbReference type="InterPro" id="IPR015946">
    <property type="entry name" value="KH_dom-like_a/b"/>
</dbReference>
<dbReference type="InterPro" id="IPR004044">
    <property type="entry name" value="KH_dom_type_2"/>
</dbReference>
<dbReference type="InterPro" id="IPR009019">
    <property type="entry name" value="KH_sf_prok-type"/>
</dbReference>
<dbReference type="InterPro" id="IPR036419">
    <property type="entry name" value="Ribosomal_S3_C_sf"/>
</dbReference>
<dbReference type="InterPro" id="IPR005704">
    <property type="entry name" value="Ribosomal_uS3_bac-typ"/>
</dbReference>
<dbReference type="InterPro" id="IPR001351">
    <property type="entry name" value="Ribosomal_uS3_C"/>
</dbReference>
<dbReference type="InterPro" id="IPR018280">
    <property type="entry name" value="Ribosomal_uS3_CS"/>
</dbReference>
<dbReference type="NCBIfam" id="TIGR01009">
    <property type="entry name" value="rpsC_bact"/>
    <property type="match status" value="1"/>
</dbReference>
<dbReference type="PANTHER" id="PTHR11760">
    <property type="entry name" value="30S/40S RIBOSOMAL PROTEIN S3"/>
    <property type="match status" value="1"/>
</dbReference>
<dbReference type="PANTHER" id="PTHR11760:SF19">
    <property type="entry name" value="SMALL RIBOSOMAL SUBUNIT PROTEIN US3C"/>
    <property type="match status" value="1"/>
</dbReference>
<dbReference type="Pfam" id="PF07650">
    <property type="entry name" value="KH_2"/>
    <property type="match status" value="1"/>
</dbReference>
<dbReference type="Pfam" id="PF00189">
    <property type="entry name" value="Ribosomal_S3_C"/>
    <property type="match status" value="1"/>
</dbReference>
<dbReference type="SMART" id="SM00322">
    <property type="entry name" value="KH"/>
    <property type="match status" value="1"/>
</dbReference>
<dbReference type="SUPFAM" id="SSF54814">
    <property type="entry name" value="Prokaryotic type KH domain (KH-domain type II)"/>
    <property type="match status" value="1"/>
</dbReference>
<dbReference type="SUPFAM" id="SSF54821">
    <property type="entry name" value="Ribosomal protein S3 C-terminal domain"/>
    <property type="match status" value="1"/>
</dbReference>
<dbReference type="PROSITE" id="PS50823">
    <property type="entry name" value="KH_TYPE_2"/>
    <property type="match status" value="1"/>
</dbReference>
<dbReference type="PROSITE" id="PS00548">
    <property type="entry name" value="RIBOSOMAL_S3"/>
    <property type="match status" value="1"/>
</dbReference>
<organism>
    <name type="scientific">Clostridium kluyveri (strain NBRC 12016)</name>
    <dbReference type="NCBI Taxonomy" id="583346"/>
    <lineage>
        <taxon>Bacteria</taxon>
        <taxon>Bacillati</taxon>
        <taxon>Bacillota</taxon>
        <taxon>Clostridia</taxon>
        <taxon>Eubacteriales</taxon>
        <taxon>Clostridiaceae</taxon>
        <taxon>Clostridium</taxon>
    </lineage>
</organism>
<gene>
    <name evidence="1" type="primary">rpsC</name>
    <name type="ordered locus">CKR_0189</name>
</gene>